<dbReference type="EMBL" id="CP000939">
    <property type="protein sequence ID" value="ACA44522.1"/>
    <property type="molecule type" value="Genomic_DNA"/>
</dbReference>
<dbReference type="RefSeq" id="WP_003357636.1">
    <property type="nucleotide sequence ID" value="NC_010516.1"/>
</dbReference>
<dbReference type="SMR" id="B1IGE1"/>
<dbReference type="KEGG" id="cbb:CLD_1037"/>
<dbReference type="HOGENOM" id="CLU_139869_3_0_9"/>
<dbReference type="Proteomes" id="UP000008541">
    <property type="component" value="Chromosome"/>
</dbReference>
<dbReference type="GO" id="GO:0005737">
    <property type="term" value="C:cytoplasm"/>
    <property type="evidence" value="ECO:0007669"/>
    <property type="project" value="UniProtKB-ARBA"/>
</dbReference>
<dbReference type="GO" id="GO:0015935">
    <property type="term" value="C:small ribosomal subunit"/>
    <property type="evidence" value="ECO:0007669"/>
    <property type="project" value="TreeGrafter"/>
</dbReference>
<dbReference type="GO" id="GO:0019843">
    <property type="term" value="F:rRNA binding"/>
    <property type="evidence" value="ECO:0007669"/>
    <property type="project" value="UniProtKB-UniRule"/>
</dbReference>
<dbReference type="GO" id="GO:0003735">
    <property type="term" value="F:structural constituent of ribosome"/>
    <property type="evidence" value="ECO:0007669"/>
    <property type="project" value="InterPro"/>
</dbReference>
<dbReference type="GO" id="GO:0008270">
    <property type="term" value="F:zinc ion binding"/>
    <property type="evidence" value="ECO:0007669"/>
    <property type="project" value="UniProtKB-UniRule"/>
</dbReference>
<dbReference type="GO" id="GO:0006412">
    <property type="term" value="P:translation"/>
    <property type="evidence" value="ECO:0007669"/>
    <property type="project" value="UniProtKB-UniRule"/>
</dbReference>
<dbReference type="FunFam" id="4.10.830.10:FF:000001">
    <property type="entry name" value="30S ribosomal protein S14 type Z"/>
    <property type="match status" value="1"/>
</dbReference>
<dbReference type="Gene3D" id="4.10.830.10">
    <property type="entry name" value="30s Ribosomal Protein S14, Chain N"/>
    <property type="match status" value="1"/>
</dbReference>
<dbReference type="HAMAP" id="MF_01364_B">
    <property type="entry name" value="Ribosomal_uS14_2_B"/>
    <property type="match status" value="1"/>
</dbReference>
<dbReference type="InterPro" id="IPR001209">
    <property type="entry name" value="Ribosomal_uS14"/>
</dbReference>
<dbReference type="InterPro" id="IPR023053">
    <property type="entry name" value="Ribosomal_uS14_bact"/>
</dbReference>
<dbReference type="InterPro" id="IPR043140">
    <property type="entry name" value="Ribosomal_uS14_sf"/>
</dbReference>
<dbReference type="NCBIfam" id="NF005974">
    <property type="entry name" value="PRK08061.1"/>
    <property type="match status" value="1"/>
</dbReference>
<dbReference type="PANTHER" id="PTHR19836">
    <property type="entry name" value="30S RIBOSOMAL PROTEIN S14"/>
    <property type="match status" value="1"/>
</dbReference>
<dbReference type="PANTHER" id="PTHR19836:SF19">
    <property type="entry name" value="SMALL RIBOSOMAL SUBUNIT PROTEIN US14M"/>
    <property type="match status" value="1"/>
</dbReference>
<dbReference type="Pfam" id="PF00253">
    <property type="entry name" value="Ribosomal_S14"/>
    <property type="match status" value="1"/>
</dbReference>
<dbReference type="SUPFAM" id="SSF57716">
    <property type="entry name" value="Glucocorticoid receptor-like (DNA-binding domain)"/>
    <property type="match status" value="1"/>
</dbReference>
<keyword id="KW-0479">Metal-binding</keyword>
<keyword id="KW-0687">Ribonucleoprotein</keyword>
<keyword id="KW-0689">Ribosomal protein</keyword>
<keyword id="KW-0694">RNA-binding</keyword>
<keyword id="KW-0699">rRNA-binding</keyword>
<keyword id="KW-0862">Zinc</keyword>
<accession>B1IGE1</accession>
<proteinExistence type="inferred from homology"/>
<protein>
    <recommendedName>
        <fullName evidence="1">Small ribosomal subunit protein uS14</fullName>
    </recommendedName>
    <alternativeName>
        <fullName evidence="2">30S ribosomal protein S14 type Z</fullName>
    </alternativeName>
</protein>
<evidence type="ECO:0000255" key="1">
    <source>
        <dbReference type="HAMAP-Rule" id="MF_01364"/>
    </source>
</evidence>
<evidence type="ECO:0000305" key="2"/>
<gene>
    <name evidence="1" type="primary">rpsZ</name>
    <name evidence="1" type="synonym">rpsN</name>
    <name type="ordered locus">CLD_1037</name>
</gene>
<sequence>MARKALIEKWNKTPKHSTRAYTRCRICGRPHAVLKKYGICRICFRELAYKGEIPGCKKASW</sequence>
<name>RS14Z_CLOBK</name>
<organism>
    <name type="scientific">Clostridium botulinum (strain Okra / Type B1)</name>
    <dbReference type="NCBI Taxonomy" id="498213"/>
    <lineage>
        <taxon>Bacteria</taxon>
        <taxon>Bacillati</taxon>
        <taxon>Bacillota</taxon>
        <taxon>Clostridia</taxon>
        <taxon>Eubacteriales</taxon>
        <taxon>Clostridiaceae</taxon>
        <taxon>Clostridium</taxon>
    </lineage>
</organism>
<feature type="chain" id="PRO_1000143892" description="Small ribosomal subunit protein uS14">
    <location>
        <begin position="1"/>
        <end position="61"/>
    </location>
</feature>
<feature type="binding site" evidence="1">
    <location>
        <position position="24"/>
    </location>
    <ligand>
        <name>Zn(2+)</name>
        <dbReference type="ChEBI" id="CHEBI:29105"/>
    </ligand>
</feature>
<feature type="binding site" evidence="1">
    <location>
        <position position="27"/>
    </location>
    <ligand>
        <name>Zn(2+)</name>
        <dbReference type="ChEBI" id="CHEBI:29105"/>
    </ligand>
</feature>
<feature type="binding site" evidence="1">
    <location>
        <position position="40"/>
    </location>
    <ligand>
        <name>Zn(2+)</name>
        <dbReference type="ChEBI" id="CHEBI:29105"/>
    </ligand>
</feature>
<feature type="binding site" evidence="1">
    <location>
        <position position="43"/>
    </location>
    <ligand>
        <name>Zn(2+)</name>
        <dbReference type="ChEBI" id="CHEBI:29105"/>
    </ligand>
</feature>
<reference key="1">
    <citation type="journal article" date="2007" name="PLoS ONE">
        <title>Analysis of the neurotoxin complex genes in Clostridium botulinum A1-A4 and B1 strains: BoNT/A3, /Ba4 and /B1 clusters are located within plasmids.</title>
        <authorList>
            <person name="Smith T.J."/>
            <person name="Hill K.K."/>
            <person name="Foley B.T."/>
            <person name="Detter J.C."/>
            <person name="Munk A.C."/>
            <person name="Bruce D.C."/>
            <person name="Doggett N.A."/>
            <person name="Smith L.A."/>
            <person name="Marks J.D."/>
            <person name="Xie G."/>
            <person name="Brettin T.S."/>
        </authorList>
    </citation>
    <scope>NUCLEOTIDE SEQUENCE [LARGE SCALE GENOMIC DNA]</scope>
    <source>
        <strain>Okra / Type B1</strain>
    </source>
</reference>
<comment type="function">
    <text evidence="1">Binds 16S rRNA, required for the assembly of 30S particles and may also be responsible for determining the conformation of the 16S rRNA at the A site.</text>
</comment>
<comment type="cofactor">
    <cofactor evidence="1">
        <name>Zn(2+)</name>
        <dbReference type="ChEBI" id="CHEBI:29105"/>
    </cofactor>
    <text evidence="1">Binds 1 zinc ion per subunit.</text>
</comment>
<comment type="subunit">
    <text evidence="1">Part of the 30S ribosomal subunit. Contacts proteins S3 and S10.</text>
</comment>
<comment type="similarity">
    <text evidence="1">Belongs to the universal ribosomal protein uS14 family. Zinc-binding uS14 subfamily.</text>
</comment>